<reference key="1">
    <citation type="journal article" date="1998" name="Gene">
        <title>cDNA cloning and expression analysis of the murine ribonuclease L inhibitor.</title>
        <authorList>
            <person name="Benoit De Coignac A."/>
            <person name="Bisbal C."/>
            <person name="Lebleu B."/>
            <person name="Salehzada T."/>
        </authorList>
    </citation>
    <scope>NUCLEOTIDE SEQUENCE [MRNA]</scope>
</reference>
<reference key="2">
    <citation type="journal article" date="2004" name="Genome Res.">
        <title>The status, quality, and expansion of the NIH full-length cDNA project: the Mammalian Gene Collection (MGC).</title>
        <authorList>
            <consortium name="The MGC Project Team"/>
        </authorList>
    </citation>
    <scope>NUCLEOTIDE SEQUENCE [LARGE SCALE MRNA]</scope>
</reference>
<reference key="3">
    <citation type="journal article" date="2000" name="Mol. Cell. Biol.">
        <title>The 2'-5' oligoadenylate/RNase L/RNase L inhibitor pathway regulates both MyoD mRNA stability and muscle cell differentiation.</title>
        <authorList>
            <person name="Bisbal C."/>
            <person name="Silhol M."/>
            <person name="Laubenthal H."/>
            <person name="Kaluza T."/>
            <person name="Carnac G."/>
            <person name="Milligan L."/>
            <person name="Le Roy F."/>
            <person name="Salehzada T."/>
        </authorList>
    </citation>
    <scope>FUNCTION</scope>
</reference>
<reference key="4">
    <citation type="journal article" date="2010" name="Cell">
        <title>A tissue-specific atlas of mouse protein phosphorylation and expression.</title>
        <authorList>
            <person name="Huttlin E.L."/>
            <person name="Jedrychowski M.P."/>
            <person name="Elias J.E."/>
            <person name="Goswami T."/>
            <person name="Rad R."/>
            <person name="Beausoleil S.A."/>
            <person name="Villen J."/>
            <person name="Haas W."/>
            <person name="Sowa M.E."/>
            <person name="Gygi S.P."/>
        </authorList>
    </citation>
    <scope>IDENTIFICATION BY MASS SPECTROMETRY [LARGE SCALE ANALYSIS]</scope>
    <source>
        <tissue>Brain</tissue>
        <tissue>Brown adipose tissue</tissue>
        <tissue>Heart</tissue>
        <tissue>Kidney</tissue>
        <tissue>Liver</tissue>
        <tissue>Lung</tissue>
        <tissue>Pancreas</tissue>
        <tissue>Spleen</tissue>
        <tissue>Testis</tissue>
    </source>
</reference>
<evidence type="ECO:0000250" key="1">
    <source>
        <dbReference type="UniProtKB" id="P61221"/>
    </source>
</evidence>
<evidence type="ECO:0000255" key="2">
    <source>
        <dbReference type="PROSITE-ProRule" id="PRU00434"/>
    </source>
</evidence>
<evidence type="ECO:0000255" key="3">
    <source>
        <dbReference type="PROSITE-ProRule" id="PRU00711"/>
    </source>
</evidence>
<evidence type="ECO:0000269" key="4">
    <source>
    </source>
</evidence>
<evidence type="ECO:0000303" key="5">
    <source>
    </source>
</evidence>
<evidence type="ECO:0000305" key="6"/>
<organism>
    <name type="scientific">Mus musculus</name>
    <name type="common">Mouse</name>
    <dbReference type="NCBI Taxonomy" id="10090"/>
    <lineage>
        <taxon>Eukaryota</taxon>
        <taxon>Metazoa</taxon>
        <taxon>Chordata</taxon>
        <taxon>Craniata</taxon>
        <taxon>Vertebrata</taxon>
        <taxon>Euteleostomi</taxon>
        <taxon>Mammalia</taxon>
        <taxon>Eutheria</taxon>
        <taxon>Euarchontoglires</taxon>
        <taxon>Glires</taxon>
        <taxon>Rodentia</taxon>
        <taxon>Myomorpha</taxon>
        <taxon>Muroidea</taxon>
        <taxon>Muridae</taxon>
        <taxon>Murinae</taxon>
        <taxon>Mus</taxon>
        <taxon>Mus</taxon>
    </lineage>
</organism>
<name>ABCE1_MOUSE</name>
<dbReference type="EC" id="3.6.5.-" evidence="1"/>
<dbReference type="EMBL" id="U90446">
    <property type="protein sequence ID" value="AAC24730.1"/>
    <property type="molecule type" value="mRNA"/>
</dbReference>
<dbReference type="EMBL" id="BC005422">
    <property type="protein sequence ID" value="AAH05422.1"/>
    <property type="molecule type" value="mRNA"/>
</dbReference>
<dbReference type="CCDS" id="CCDS22438.1"/>
<dbReference type="PIR" id="JC6555">
    <property type="entry name" value="JC6555"/>
</dbReference>
<dbReference type="RefSeq" id="NP_056566.2">
    <property type="nucleotide sequence ID" value="NM_015751.2"/>
</dbReference>
<dbReference type="SMR" id="P61222"/>
<dbReference type="BioGRID" id="204855">
    <property type="interactions" value="45"/>
</dbReference>
<dbReference type="FunCoup" id="P61222">
    <property type="interactions" value="4570"/>
</dbReference>
<dbReference type="IntAct" id="P61222">
    <property type="interactions" value="1"/>
</dbReference>
<dbReference type="STRING" id="10090.ENSMUSP00000079379"/>
<dbReference type="GlyGen" id="P61222">
    <property type="glycosylation" value="2 sites, 1 N-linked glycan (1 site), 1 O-linked glycan (1 site)"/>
</dbReference>
<dbReference type="iPTMnet" id="P61222"/>
<dbReference type="MetOSite" id="P61222"/>
<dbReference type="PhosphoSitePlus" id="P61222"/>
<dbReference type="SwissPalm" id="P61222"/>
<dbReference type="jPOST" id="P61222"/>
<dbReference type="PaxDb" id="10090-ENSMUSP00000079379"/>
<dbReference type="PeptideAtlas" id="P61222"/>
<dbReference type="ProteomicsDB" id="286047"/>
<dbReference type="Pumba" id="P61222"/>
<dbReference type="Antibodypedia" id="27438">
    <property type="antibodies" value="329 antibodies from 30 providers"/>
</dbReference>
<dbReference type="DNASU" id="24015"/>
<dbReference type="Ensembl" id="ENSMUST00000080536.8">
    <property type="protein sequence ID" value="ENSMUSP00000079379.7"/>
    <property type="gene ID" value="ENSMUSG00000058355.9"/>
</dbReference>
<dbReference type="GeneID" id="24015"/>
<dbReference type="KEGG" id="mmu:24015"/>
<dbReference type="UCSC" id="uc009mit.1">
    <property type="organism name" value="mouse"/>
</dbReference>
<dbReference type="AGR" id="MGI:1195458"/>
<dbReference type="CTD" id="6059"/>
<dbReference type="MGI" id="MGI:1195458">
    <property type="gene designation" value="Abce1"/>
</dbReference>
<dbReference type="VEuPathDB" id="HostDB:ENSMUSG00000058355"/>
<dbReference type="eggNOG" id="KOG0063">
    <property type="taxonomic scope" value="Eukaryota"/>
</dbReference>
<dbReference type="GeneTree" id="ENSGT00390000015089"/>
<dbReference type="HOGENOM" id="CLU_017344_4_1_1"/>
<dbReference type="InParanoid" id="P61222"/>
<dbReference type="OMA" id="MVCIQNG"/>
<dbReference type="OrthoDB" id="6593433at2759"/>
<dbReference type="PhylomeDB" id="P61222"/>
<dbReference type="TreeFam" id="TF105206"/>
<dbReference type="Reactome" id="R-MMU-8983711">
    <property type="pathway name" value="OAS antiviral response"/>
</dbReference>
<dbReference type="Reactome" id="R-MMU-909733">
    <property type="pathway name" value="Interferon alpha/beta signaling"/>
</dbReference>
<dbReference type="BioGRID-ORCS" id="24015">
    <property type="hits" value="24 hits in 77 CRISPR screens"/>
</dbReference>
<dbReference type="ChiTaRS" id="Abce1">
    <property type="organism name" value="mouse"/>
</dbReference>
<dbReference type="PRO" id="PR:P61222"/>
<dbReference type="Proteomes" id="UP000000589">
    <property type="component" value="Chromosome 8"/>
</dbReference>
<dbReference type="RNAct" id="P61222">
    <property type="molecule type" value="protein"/>
</dbReference>
<dbReference type="Bgee" id="ENSMUSG00000058355">
    <property type="expression patterns" value="Expressed in floor plate of midbrain and 280 other cell types or tissues"/>
</dbReference>
<dbReference type="ExpressionAtlas" id="P61222">
    <property type="expression patterns" value="baseline and differential"/>
</dbReference>
<dbReference type="GO" id="GO:0005737">
    <property type="term" value="C:cytoplasm"/>
    <property type="evidence" value="ECO:0000250"/>
    <property type="project" value="UniProtKB"/>
</dbReference>
<dbReference type="GO" id="GO:0022626">
    <property type="term" value="C:cytosolic ribosome"/>
    <property type="evidence" value="ECO:0007669"/>
    <property type="project" value="Ensembl"/>
</dbReference>
<dbReference type="GO" id="GO:0005739">
    <property type="term" value="C:mitochondrion"/>
    <property type="evidence" value="ECO:0000250"/>
    <property type="project" value="UniProtKB"/>
</dbReference>
<dbReference type="GO" id="GO:0051539">
    <property type="term" value="F:4 iron, 4 sulfur cluster binding"/>
    <property type="evidence" value="ECO:0007669"/>
    <property type="project" value="UniProtKB-KW"/>
</dbReference>
<dbReference type="GO" id="GO:0005524">
    <property type="term" value="F:ATP binding"/>
    <property type="evidence" value="ECO:0007669"/>
    <property type="project" value="UniProtKB-KW"/>
</dbReference>
<dbReference type="GO" id="GO:0016887">
    <property type="term" value="F:ATP hydrolysis activity"/>
    <property type="evidence" value="ECO:0000250"/>
    <property type="project" value="UniProtKB"/>
</dbReference>
<dbReference type="GO" id="GO:0043273">
    <property type="term" value="F:CTPase activity"/>
    <property type="evidence" value="ECO:0000250"/>
    <property type="project" value="UniProtKB"/>
</dbReference>
<dbReference type="GO" id="GO:0060698">
    <property type="term" value="F:endoribonuclease inhibitor activity"/>
    <property type="evidence" value="ECO:0007669"/>
    <property type="project" value="Ensembl"/>
</dbReference>
<dbReference type="GO" id="GO:0003924">
    <property type="term" value="F:GTPase activity"/>
    <property type="evidence" value="ECO:0000250"/>
    <property type="project" value="UniProtKB"/>
</dbReference>
<dbReference type="GO" id="GO:0046872">
    <property type="term" value="F:metal ion binding"/>
    <property type="evidence" value="ECO:0007669"/>
    <property type="project" value="UniProtKB-KW"/>
</dbReference>
<dbReference type="GO" id="GO:0006417">
    <property type="term" value="P:regulation of translation"/>
    <property type="evidence" value="ECO:0007669"/>
    <property type="project" value="UniProtKB-KW"/>
</dbReference>
<dbReference type="GO" id="GO:0072344">
    <property type="term" value="P:rescue of stalled ribosome"/>
    <property type="evidence" value="ECO:0000250"/>
    <property type="project" value="UniProtKB"/>
</dbReference>
<dbReference type="GO" id="GO:0032790">
    <property type="term" value="P:ribosome disassembly"/>
    <property type="evidence" value="ECO:0000250"/>
    <property type="project" value="UniProtKB"/>
</dbReference>
<dbReference type="GO" id="GO:0006415">
    <property type="term" value="P:translational termination"/>
    <property type="evidence" value="ECO:0007669"/>
    <property type="project" value="Ensembl"/>
</dbReference>
<dbReference type="CDD" id="cd03236">
    <property type="entry name" value="ABC_RNaseL_inhibitor_domain1"/>
    <property type="match status" value="1"/>
</dbReference>
<dbReference type="CDD" id="cd03237">
    <property type="entry name" value="ABC_RNaseL_inhibitor_domain2"/>
    <property type="match status" value="1"/>
</dbReference>
<dbReference type="FunFam" id="3.40.50.300:FF:000144">
    <property type="entry name" value="ATP-binding cassette sub-family E member 1"/>
    <property type="match status" value="1"/>
</dbReference>
<dbReference type="FunFam" id="3.40.50.300:FF:000152">
    <property type="entry name" value="ATP-binding cassette, sub-family E, member 1"/>
    <property type="match status" value="1"/>
</dbReference>
<dbReference type="Gene3D" id="3.40.50.300">
    <property type="entry name" value="P-loop containing nucleotide triphosphate hydrolases"/>
    <property type="match status" value="2"/>
</dbReference>
<dbReference type="InterPro" id="IPR017896">
    <property type="entry name" value="4Fe4S_Fe-S-bd"/>
</dbReference>
<dbReference type="InterPro" id="IPR017900">
    <property type="entry name" value="4Fe4S_Fe_S_CS"/>
</dbReference>
<dbReference type="InterPro" id="IPR003593">
    <property type="entry name" value="AAA+_ATPase"/>
</dbReference>
<dbReference type="InterPro" id="IPR003439">
    <property type="entry name" value="ABC_transporter-like_ATP-bd"/>
</dbReference>
<dbReference type="InterPro" id="IPR017871">
    <property type="entry name" value="ABC_transporter-like_CS"/>
</dbReference>
<dbReference type="InterPro" id="IPR027417">
    <property type="entry name" value="P-loop_NTPase"/>
</dbReference>
<dbReference type="InterPro" id="IPR013283">
    <property type="entry name" value="RLI1"/>
</dbReference>
<dbReference type="InterPro" id="IPR034348">
    <property type="entry name" value="RLI_dom_1"/>
</dbReference>
<dbReference type="InterPro" id="IPR007209">
    <property type="entry name" value="RNaseL-inhib-like_metal-bd_dom"/>
</dbReference>
<dbReference type="NCBIfam" id="NF009945">
    <property type="entry name" value="PRK13409.1"/>
    <property type="match status" value="1"/>
</dbReference>
<dbReference type="PANTHER" id="PTHR19248">
    <property type="entry name" value="ATP-BINDING TRANSPORT PROTEIN-RELATED"/>
    <property type="match status" value="1"/>
</dbReference>
<dbReference type="Pfam" id="PF00005">
    <property type="entry name" value="ABC_tran"/>
    <property type="match status" value="2"/>
</dbReference>
<dbReference type="Pfam" id="PF00037">
    <property type="entry name" value="Fer4"/>
    <property type="match status" value="1"/>
</dbReference>
<dbReference type="Pfam" id="PF04068">
    <property type="entry name" value="Fer4_RLI"/>
    <property type="match status" value="1"/>
</dbReference>
<dbReference type="PRINTS" id="PR01868">
    <property type="entry name" value="ABCEFAMILY"/>
</dbReference>
<dbReference type="SMART" id="SM00382">
    <property type="entry name" value="AAA"/>
    <property type="match status" value="2"/>
</dbReference>
<dbReference type="SUPFAM" id="SSF54862">
    <property type="entry name" value="4Fe-4S ferredoxins"/>
    <property type="match status" value="1"/>
</dbReference>
<dbReference type="SUPFAM" id="SSF52540">
    <property type="entry name" value="P-loop containing nucleoside triphosphate hydrolases"/>
    <property type="match status" value="2"/>
</dbReference>
<dbReference type="PROSITE" id="PS00198">
    <property type="entry name" value="4FE4S_FER_1"/>
    <property type="match status" value="1"/>
</dbReference>
<dbReference type="PROSITE" id="PS51379">
    <property type="entry name" value="4FE4S_FER_2"/>
    <property type="match status" value="2"/>
</dbReference>
<dbReference type="PROSITE" id="PS00211">
    <property type="entry name" value="ABC_TRANSPORTER_1"/>
    <property type="match status" value="1"/>
</dbReference>
<dbReference type="PROSITE" id="PS50893">
    <property type="entry name" value="ABC_TRANSPORTER_2"/>
    <property type="match status" value="2"/>
</dbReference>
<comment type="function">
    <text evidence="1 4">Nucleoside-triphosphatase (NTPase) involved in ribosome recycling by mediating ribosome disassembly (By similarity). Able to hydrolyze ATP, GTP, UTP and CTP (By similarity). Splits ribosomes into free 60S subunits and tRNA- and mRNA-bound 40S subunits (By similarity). Acts either after canonical termination facilitated by release factors (ETF1/eRF1) or after recognition of stalled and vacant ribosomes by mRNA surveillance factors (PELO/Pelota) (By similarity). Involved in the No-Go Decay (NGD) pathway: recruited to stalled ribosomes by the Pelota-HBS1L complex, and drives the disassembly of stalled ribosomes, followed by degradation of damaged mRNAs as part of the NGD pathway (By similarity). Also plays a role in quality control of translation of mitochondrial outer membrane-localized mRNA (By similarity). As part of the PINK1-regulated signaling, ubiquitinated by CNOT4 upon mitochondria damage; this modification generates polyubiquitin signals that recruit autophagy receptors to the mitochondrial outer membrane and initiate mitophagy (By similarity). RNASEL-specific protein inhibitor which antagonizes the binding of 2-5A (5'-phosphorylated 2',5'-linked oligoadenylates) to RNASEL (PubMed:10866653). Negative regulator of the anti-viral effect of the interferon-regulated 2-5A/RNASEL pathway (By similarity).</text>
</comment>
<comment type="catalytic activity">
    <reaction evidence="1">
        <text>GTP + H2O = GDP + phosphate + H(+)</text>
        <dbReference type="Rhea" id="RHEA:19669"/>
        <dbReference type="ChEBI" id="CHEBI:15377"/>
        <dbReference type="ChEBI" id="CHEBI:15378"/>
        <dbReference type="ChEBI" id="CHEBI:37565"/>
        <dbReference type="ChEBI" id="CHEBI:43474"/>
        <dbReference type="ChEBI" id="CHEBI:58189"/>
    </reaction>
</comment>
<comment type="catalytic activity">
    <reaction evidence="1">
        <text>ATP + H2O = ADP + phosphate + H(+)</text>
        <dbReference type="Rhea" id="RHEA:13065"/>
        <dbReference type="ChEBI" id="CHEBI:15377"/>
        <dbReference type="ChEBI" id="CHEBI:15378"/>
        <dbReference type="ChEBI" id="CHEBI:30616"/>
        <dbReference type="ChEBI" id="CHEBI:43474"/>
        <dbReference type="ChEBI" id="CHEBI:456216"/>
    </reaction>
</comment>
<comment type="catalytic activity">
    <reaction evidence="1">
        <text>CTP + H2O = CDP + phosphate + H(+)</text>
        <dbReference type="Rhea" id="RHEA:29387"/>
        <dbReference type="ChEBI" id="CHEBI:15377"/>
        <dbReference type="ChEBI" id="CHEBI:15378"/>
        <dbReference type="ChEBI" id="CHEBI:37563"/>
        <dbReference type="ChEBI" id="CHEBI:43474"/>
        <dbReference type="ChEBI" id="CHEBI:58069"/>
    </reaction>
</comment>
<comment type="catalytic activity">
    <reaction evidence="1">
        <text>UTP + H2O = UDP + phosphate + H(+)</text>
        <dbReference type="Rhea" id="RHEA:64900"/>
        <dbReference type="ChEBI" id="CHEBI:15377"/>
        <dbReference type="ChEBI" id="CHEBI:15378"/>
        <dbReference type="ChEBI" id="CHEBI:43474"/>
        <dbReference type="ChEBI" id="CHEBI:46398"/>
        <dbReference type="ChEBI" id="CHEBI:58223"/>
    </reaction>
</comment>
<comment type="subunit">
    <text evidence="1">Interacts with PINK1. Interacts with CNOT4. Interacts with PELO. Probably heterodimerizes with RNASEL; this interaction inhibits RNASEL.</text>
</comment>
<comment type="subcellular location">
    <subcellularLocation>
        <location evidence="1">Cytoplasm</location>
    </subcellularLocation>
    <subcellularLocation>
        <location evidence="1">Mitochondrion</location>
    </subcellularLocation>
</comment>
<comment type="PTM">
    <text evidence="1">Ubiquitinated by CNOT4 (By similarity). Ubiquitination mediates the recruitment of autophagy receptors to the mitochondrial outer membrane and initiates mitophagy (By similarity).</text>
</comment>
<comment type="similarity">
    <text evidence="6">Belongs to the ABC transporter superfamily. ABCE family.</text>
</comment>
<sequence length="599" mass="67314">MADKLTRIAIVNHDKCKPKKCRQECKKSCPVVRMGKLCIEVTPQSKIAWISETLCIGCGICIKKCPFGALSIVNLPSNLEKETTHRYCANAFKLHRLPIPRPGEVLGLVGTNGIGKSTALKILAGKQKPNLGKYDDPPDWQEILTYFRGSELQNYFTKILEDDLKAIIKPQYVDQIPKAAKGTVGSILDRKDETKTQAIVCQQLDLTHLKERNVEDLSGGELQRFACAVVCIQKADIFMFDEPSSYLDVKQRLKAAITIRSLINPDRYIIVVEHDLSVLDYLSDFICCLYGVPSAYGVVTMPFSVREGINIFLDGYVPTENLRFRDASLVFKVAETANEEEVKKMCMYKYPGMKKKMGEFELAIVAGEFTDSEIMVMLGENGTGKTTFIRMLAGRLKPDEGGEVPVLNVSYKPQKISPKSTGSVRQLLHEKIRDAYTHPQFVTDVMKPLQIENIIDQEVQTLSGGELQRVALALCLGKPADVYLIDEPSAYLDSEQRLMAARVVKRFILHAKKTAFVVEHDFIMATYLADRVIVFDGVPSKNTVANSPQTLLAGMNKFLSQLEITFRRDPNNYRPRINKLNSIKDVEQKKSGNYFFLDD</sequence>
<feature type="chain" id="PRO_0000093317" description="ATP-binding cassette sub-family E member 1">
    <location>
        <begin position="1"/>
        <end position="599"/>
    </location>
</feature>
<feature type="domain" description="4Fe-4S ferredoxin-type 1" evidence="3">
    <location>
        <begin position="7"/>
        <end position="37"/>
    </location>
</feature>
<feature type="domain" description="4Fe-4S ferredoxin-type 2" evidence="3">
    <location>
        <begin position="46"/>
        <end position="75"/>
    </location>
</feature>
<feature type="domain" description="ABC transporter 1" evidence="2">
    <location>
        <begin position="79"/>
        <end position="315"/>
    </location>
</feature>
<feature type="domain" description="ABC transporter 2" evidence="2">
    <location>
        <begin position="342"/>
        <end position="562"/>
    </location>
</feature>
<feature type="binding site" evidence="2">
    <location>
        <begin position="110"/>
        <end position="117"/>
    </location>
    <ligand>
        <name>ATP</name>
        <dbReference type="ChEBI" id="CHEBI:30616"/>
        <label>1</label>
    </ligand>
</feature>
<feature type="binding site" evidence="2">
    <location>
        <begin position="379"/>
        <end position="386"/>
    </location>
    <ligand>
        <name>ATP</name>
        <dbReference type="ChEBI" id="CHEBI:30616"/>
        <label>2</label>
    </ligand>
</feature>
<feature type="modified residue" description="Phosphoserine" evidence="1">
    <location>
        <position position="417"/>
    </location>
</feature>
<feature type="modified residue" description="Phosphothreonine" evidence="1">
    <location>
        <position position="550"/>
    </location>
</feature>
<feature type="sequence conflict" description="In Ref. 1; AAC24730." evidence="6" ref="1">
    <original>Q</original>
    <variation>K</variation>
    <location>
        <position position="153"/>
    </location>
</feature>
<feature type="sequence conflict" description="In Ref. 1; AAC24730." evidence="6" ref="1">
    <original>K</original>
    <variation>T</variation>
    <location>
        <position position="158"/>
    </location>
</feature>
<proteinExistence type="evidence at protein level"/>
<gene>
    <name type="primary">Abce1</name>
    <name evidence="5" type="synonym">Rli</name>
</gene>
<accession>P61222</accession>
<accession>O88793</accession>
<accession>Q13181</accession>
<accession>Q13864</accession>
<accession>Q96AL0</accession>
<accession>Q96B10</accession>
<accession>Q99K66</accession>
<keyword id="KW-0004">4Fe-4S</keyword>
<keyword id="KW-0067">ATP-binding</keyword>
<keyword id="KW-0143">Chaperone</keyword>
<keyword id="KW-0963">Cytoplasm</keyword>
<keyword id="KW-0378">Hydrolase</keyword>
<keyword id="KW-0408">Iron</keyword>
<keyword id="KW-0411">Iron-sulfur</keyword>
<keyword id="KW-0479">Metal-binding</keyword>
<keyword id="KW-0496">Mitochondrion</keyword>
<keyword id="KW-0547">Nucleotide-binding</keyword>
<keyword id="KW-0597">Phosphoprotein</keyword>
<keyword id="KW-1185">Reference proteome</keyword>
<keyword id="KW-0677">Repeat</keyword>
<keyword id="KW-0810">Translation regulation</keyword>
<keyword id="KW-0832">Ubl conjugation</keyword>
<protein>
    <recommendedName>
        <fullName>ATP-binding cassette sub-family E member 1</fullName>
    </recommendedName>
    <alternativeName>
        <fullName evidence="5">RNase L inhibitor</fullName>
        <ecNumber evidence="1">3.6.5.-</ecNumber>
    </alternativeName>
    <alternativeName>
        <fullName evidence="5">Ribonuclease 4 inhibitor</fullName>
        <shortName evidence="5">RNS4I</shortName>
    </alternativeName>
</protein>